<name>QADG_PSEPK</name>
<comment type="function">
    <text evidence="1">Catalyzes the oxidative deamination of a wide range of aliphatic monoamines and diamines (By similarity). The physiological electron acceptor is an azurin-like blue protein (By similarity).</text>
</comment>
<comment type="catalytic activity">
    <reaction evidence="1">
        <text>an aliphatic amine + A + H2O = an aldehyde + AH2 + NH4(+)</text>
        <dbReference type="Rhea" id="RHEA:51128"/>
        <dbReference type="ChEBI" id="CHEBI:13193"/>
        <dbReference type="ChEBI" id="CHEBI:15377"/>
        <dbReference type="ChEBI" id="CHEBI:17478"/>
        <dbReference type="ChEBI" id="CHEBI:17499"/>
        <dbReference type="ChEBI" id="CHEBI:28938"/>
        <dbReference type="ChEBI" id="CHEBI:58001"/>
    </reaction>
    <physiologicalReaction direction="left-to-right" evidence="1">
        <dbReference type="Rhea" id="RHEA:51129"/>
    </physiologicalReaction>
</comment>
<comment type="cofactor">
    <cofactor evidence="1">
        <name>cysteine tryptophylquinone residue</name>
        <dbReference type="ChEBI" id="CHEBI:20252"/>
    </cofactor>
    <text evidence="1">Contains 1 cysteine tryptophylquinone per subunit.</text>
</comment>
<comment type="subunit">
    <text evidence="1">Heterotrimer of an alpha, a beta and a gamma subunit.</text>
</comment>
<comment type="subcellular location">
    <subcellularLocation>
        <location evidence="1">Periplasm</location>
    </subcellularLocation>
    <text evidence="2">Is probably co-translocated into the periplasm when associated with the alpha and/or beta subunit, which contain both a signal peptide.</text>
</comment>
<comment type="PTM">
    <text evidence="1">The cysteine tryptophylquinone (CTQ) is generated by oxidation of the indole ring of a tryptophan residue to form tryptophylquinone, followed by covalent cross-linking with a cysteine residue.</text>
</comment>
<comment type="similarity">
    <text evidence="3">Belongs to the quinohemoprotein amine dehydrogenase subunit gamma family.</text>
</comment>
<comment type="sequence caution" evidence="3">
    <conflict type="erroneous initiation">
        <sequence resource="EMBL-CDS" id="AAN69062"/>
    </conflict>
    <text>Extended N-terminus.</text>
</comment>
<evidence type="ECO:0000250" key="1">
    <source>
        <dbReference type="UniProtKB" id="P0A182"/>
    </source>
</evidence>
<evidence type="ECO:0000250" key="2">
    <source>
        <dbReference type="UniProtKB" id="Q8VUS8"/>
    </source>
</evidence>
<evidence type="ECO:0000305" key="3"/>
<organism>
    <name type="scientific">Pseudomonas putida (strain ATCC 47054 / DSM 6125 / CFBP 8728 / NCIMB 11950 / KT2440)</name>
    <dbReference type="NCBI Taxonomy" id="160488"/>
    <lineage>
        <taxon>Bacteria</taxon>
        <taxon>Pseudomonadati</taxon>
        <taxon>Pseudomonadota</taxon>
        <taxon>Gammaproteobacteria</taxon>
        <taxon>Pseudomonadales</taxon>
        <taxon>Pseudomonadaceae</taxon>
        <taxon>Pseudomonas</taxon>
    </lineage>
</organism>
<proteinExistence type="inferred from homology"/>
<keyword id="KW-0885">CTQ</keyword>
<keyword id="KW-0249">Electron transport</keyword>
<keyword id="KW-0560">Oxidoreductase</keyword>
<keyword id="KW-0574">Periplasm</keyword>
<keyword id="KW-1185">Reference proteome</keyword>
<keyword id="KW-0883">Thioether bond</keyword>
<keyword id="KW-0813">Transport</keyword>
<sequence>MSAVAGCTATTDPGWEVDAFGGVSSLCQPMEADLYGCSDPCWWPAQVPDMMSTYQDWNAQASNSAEDWRNLGTVFPKDK</sequence>
<gene>
    <name type="primary">qhnDH</name>
    <name type="ordered locus">PP_3460</name>
</gene>
<protein>
    <recommendedName>
        <fullName>Quinohemoprotein amine dehydrogenase subunit gamma</fullName>
        <shortName>QH-AmDH</shortName>
        <ecNumber evidence="1">1.4.9.-</ecNumber>
    </recommendedName>
    <alternativeName>
        <fullName>Quinohemoprotein amine dehydrogenase 9 kDa subunit</fullName>
    </alternativeName>
    <alternativeName>
        <fullName>Quinohemoprotein amine dehydrogenase catalytic subunit</fullName>
    </alternativeName>
</protein>
<reference key="1">
    <citation type="journal article" date="2002" name="Environ. Microbiol.">
        <title>Complete genome sequence and comparative analysis of the metabolically versatile Pseudomonas putida KT2440.</title>
        <authorList>
            <person name="Nelson K.E."/>
            <person name="Weinel C."/>
            <person name="Paulsen I.T."/>
            <person name="Dodson R.J."/>
            <person name="Hilbert H."/>
            <person name="Martins dos Santos V.A.P."/>
            <person name="Fouts D.E."/>
            <person name="Gill S.R."/>
            <person name="Pop M."/>
            <person name="Holmes M."/>
            <person name="Brinkac L.M."/>
            <person name="Beanan M.J."/>
            <person name="DeBoy R.T."/>
            <person name="Daugherty S.C."/>
            <person name="Kolonay J.F."/>
            <person name="Madupu R."/>
            <person name="Nelson W.C."/>
            <person name="White O."/>
            <person name="Peterson J.D."/>
            <person name="Khouri H.M."/>
            <person name="Hance I."/>
            <person name="Chris Lee P."/>
            <person name="Holtzapple E.K."/>
            <person name="Scanlan D."/>
            <person name="Tran K."/>
            <person name="Moazzez A."/>
            <person name="Utterback T.R."/>
            <person name="Rizzo M."/>
            <person name="Lee K."/>
            <person name="Kosack D."/>
            <person name="Moestl D."/>
            <person name="Wedler H."/>
            <person name="Lauber J."/>
            <person name="Stjepandic D."/>
            <person name="Hoheisel J."/>
            <person name="Straetz M."/>
            <person name="Heim S."/>
            <person name="Kiewitz C."/>
            <person name="Eisen J.A."/>
            <person name="Timmis K.N."/>
            <person name="Duesterhoeft A."/>
            <person name="Tuemmler B."/>
            <person name="Fraser C.M."/>
        </authorList>
    </citation>
    <scope>NUCLEOTIDE SEQUENCE [LARGE SCALE GENOMIC DNA]</scope>
    <source>
        <strain>ATCC 47054 / DSM 6125 / CFBP 8728 / NCIMB 11950 / KT2440</strain>
    </source>
</reference>
<dbReference type="EC" id="1.4.9.-" evidence="1"/>
<dbReference type="EMBL" id="AE015451">
    <property type="protein sequence ID" value="AAN69062.1"/>
    <property type="status" value="ALT_INIT"/>
    <property type="molecule type" value="Genomic_DNA"/>
</dbReference>
<dbReference type="RefSeq" id="NP_745598.1">
    <property type="nucleotide sequence ID" value="NC_002947.4"/>
</dbReference>
<dbReference type="SMR" id="P0A181"/>
<dbReference type="STRING" id="160488.PP_3460"/>
<dbReference type="PaxDb" id="160488-PP_3460"/>
<dbReference type="KEGG" id="ppu:PP_3460"/>
<dbReference type="PATRIC" id="fig|160488.4.peg.3677"/>
<dbReference type="eggNOG" id="ENOG50324ZB">
    <property type="taxonomic scope" value="Bacteria"/>
</dbReference>
<dbReference type="HOGENOM" id="CLU_177012_0_0_6"/>
<dbReference type="OrthoDB" id="5344384at2"/>
<dbReference type="Proteomes" id="UP000000556">
    <property type="component" value="Chromosome"/>
</dbReference>
<dbReference type="GO" id="GO:0042597">
    <property type="term" value="C:periplasmic space"/>
    <property type="evidence" value="ECO:0007669"/>
    <property type="project" value="UniProtKB-SubCell"/>
</dbReference>
<dbReference type="GO" id="GO:0030058">
    <property type="term" value="F:aliphatic amine dehydrogenase activity"/>
    <property type="evidence" value="ECO:0007669"/>
    <property type="project" value="RHEA"/>
</dbReference>
<dbReference type="Gene3D" id="4.10.940.10">
    <property type="entry name" value="Quinohemoprotein amine dehydrogenase, gamma subunit structural domain"/>
    <property type="match status" value="1"/>
</dbReference>
<dbReference type="InterPro" id="IPR015084">
    <property type="entry name" value="QH-AmDH_gsu_dom"/>
</dbReference>
<dbReference type="InterPro" id="IPR036487">
    <property type="entry name" value="QH-AmDH_gsu_sf"/>
</dbReference>
<dbReference type="InterPro" id="IPR047830">
    <property type="entry name" value="QHNDH_gamma"/>
</dbReference>
<dbReference type="NCBIfam" id="NF037958">
    <property type="entry name" value="QH_gamma"/>
    <property type="match status" value="1"/>
</dbReference>
<dbReference type="Pfam" id="PF08992">
    <property type="entry name" value="QH-AmDH_gamma"/>
    <property type="match status" value="1"/>
</dbReference>
<dbReference type="SUPFAM" id="SSF69131">
    <property type="entry name" value="Quinohemoprotein amine dehydrogenase C chain"/>
    <property type="match status" value="1"/>
</dbReference>
<accession>P0A181</accession>
<accession>Q88HA0</accession>
<accession>Q8VW83</accession>
<feature type="initiator methionine" description="Removed" evidence="1">
    <location>
        <position position="1"/>
    </location>
</feature>
<feature type="chain" id="PRO_0000220550" description="Quinohemoprotein amine dehydrogenase subunit gamma">
    <location>
        <begin position="2"/>
        <end position="79"/>
    </location>
</feature>
<feature type="active site" description="Proton acceptor" evidence="1">
    <location>
        <position position="33"/>
    </location>
</feature>
<feature type="modified residue" description="Tryptophylquinone" evidence="1">
    <location>
        <position position="43"/>
    </location>
</feature>
<feature type="cross-link" description="4-cysteinyl-glutamic acid (Cys-Glu)" evidence="1">
    <location>
        <begin position="7"/>
        <end position="16"/>
    </location>
</feature>
<feature type="cross-link" description="3-cysteinyl-aspartic acid (Cys-Asp)" evidence="1">
    <location>
        <begin position="27"/>
        <end position="33"/>
    </location>
</feature>
<feature type="cross-link" description="4'-cysteinyl-tryptophylquinone (Cys-Trp)" evidence="1">
    <location>
        <begin position="37"/>
        <end position="43"/>
    </location>
</feature>
<feature type="cross-link" description="3-cysteinyl-aspartic acid (Cys-Asp)" evidence="1">
    <location>
        <begin position="41"/>
        <end position="49"/>
    </location>
</feature>